<organism>
    <name type="scientific">Aquarana catesbeiana</name>
    <name type="common">American bullfrog</name>
    <name type="synonym">Rana catesbeiana</name>
    <dbReference type="NCBI Taxonomy" id="8400"/>
    <lineage>
        <taxon>Eukaryota</taxon>
        <taxon>Metazoa</taxon>
        <taxon>Chordata</taxon>
        <taxon>Craniata</taxon>
        <taxon>Vertebrata</taxon>
        <taxon>Euteleostomi</taxon>
        <taxon>Amphibia</taxon>
        <taxon>Batrachia</taxon>
        <taxon>Anura</taxon>
        <taxon>Neobatrachia</taxon>
        <taxon>Ranoidea</taxon>
        <taxon>Ranidae</taxon>
        <taxon>Aquarana</taxon>
    </lineage>
</organism>
<reference key="1">
    <citation type="journal article" date="1998" name="Biochem. Biophys. Res. Commun.">
        <title>Ranatuerins: antimicrobial peptides isolated from the skin of the American bullfrog, Rana catesbeiana.</title>
        <authorList>
            <person name="Goraya J."/>
            <person name="Knoop F.C."/>
            <person name="Conlon J.M."/>
        </authorList>
    </citation>
    <scope>PROTEIN SEQUENCE</scope>
    <scope>FUNCTION</scope>
    <scope>SUBCELLULAR LOCATION</scope>
    <source>
        <tissue>Skin secretion</tissue>
    </source>
</reference>
<evidence type="ECO:0000269" key="1">
    <source>
    </source>
</evidence>
<evidence type="ECO:0000303" key="2">
    <source>
    </source>
</evidence>
<evidence type="ECO:0000305" key="3"/>
<evidence type="ECO:0000305" key="4">
    <source>
    </source>
</evidence>
<dbReference type="GO" id="GO:0005576">
    <property type="term" value="C:extracellular region"/>
    <property type="evidence" value="ECO:0007669"/>
    <property type="project" value="UniProtKB-SubCell"/>
</dbReference>
<dbReference type="GO" id="GO:0042742">
    <property type="term" value="P:defense response to bacterium"/>
    <property type="evidence" value="ECO:0007669"/>
    <property type="project" value="UniProtKB-KW"/>
</dbReference>
<accession>P82823</accession>
<feature type="peptide" id="PRO_0000043565" description="Ranatuerin-8" evidence="1">
    <location>
        <begin position="1"/>
        <end position="13"/>
    </location>
</feature>
<proteinExistence type="evidence at protein level"/>
<comment type="function">
    <text evidence="1">Antibacterial activity against Gram-positive bacterium S.aureus (MIC=130 uM). Shows no detectable hemolytic activity towards human erythrocytes.</text>
</comment>
<comment type="subcellular location">
    <subcellularLocation>
        <location evidence="1">Secreted</location>
    </subcellularLocation>
</comment>
<comment type="tissue specificity">
    <text evidence="4">Expressed by the skin glands.</text>
</comment>
<comment type="similarity">
    <text evidence="3">Belongs to the frog skin active peptide (FSAP) family. Temporin subfamily.</text>
</comment>
<name>TP8_AQUCT</name>
<sequence length="13" mass="1414">FISAIASFLGKFL</sequence>
<keyword id="KW-0878">Amphibian defense peptide</keyword>
<keyword id="KW-0044">Antibiotic</keyword>
<keyword id="KW-0929">Antimicrobial</keyword>
<keyword id="KW-0903">Direct protein sequencing</keyword>
<keyword id="KW-0964">Secreted</keyword>
<protein>
    <recommendedName>
        <fullName evidence="2">Ranatuerin-8</fullName>
    </recommendedName>
    <alternativeName>
        <fullName evidence="3">Temporin</fullName>
    </alternativeName>
</protein>